<name>MPAH2_PENBR</name>
<gene>
    <name evidence="4" type="primary">mpaH'</name>
</gene>
<reference key="1">
    <citation type="journal article" date="2015" name="ChemBioChem">
        <title>Functional characterization of MpaG', the O-methyltransferase involved in the biosynthesis of mycophenolic acid.</title>
        <authorList>
            <person name="Zhang W."/>
            <person name="Cao S."/>
            <person name="Qiu L."/>
            <person name="Qi F."/>
            <person name="Li Z."/>
            <person name="Yang Y."/>
            <person name="Huang S."/>
            <person name="Bai F."/>
            <person name="Liu C."/>
            <person name="Wan X."/>
            <person name="Li S."/>
        </authorList>
    </citation>
    <scope>NUCLEOTIDE SEQUENCE [GENOMIC DNA]</scope>
    <source>
        <strain>NRRL864</strain>
    </source>
</reference>
<reference key="2">
    <citation type="journal article" date="2019" name="Proc. Natl. Acad. Sci. U.S.A.">
        <title>Compartmentalized biosynthesis of mycophenolic acid.</title>
        <authorList>
            <person name="Zhang W."/>
            <person name="Du L."/>
            <person name="Qu Z."/>
            <person name="Zhang X."/>
            <person name="Li F."/>
            <person name="Li Z."/>
            <person name="Qi F."/>
            <person name="Wang X."/>
            <person name="Jiang Y."/>
            <person name="Men P."/>
            <person name="Sun J."/>
            <person name="Cao S."/>
            <person name="Geng C."/>
            <person name="Qi F."/>
            <person name="Wan X."/>
            <person name="Liu C."/>
            <person name="Li S."/>
        </authorList>
    </citation>
    <scope>FUNCTION</scope>
    <scope>CATALYTIC ACTIVITY</scope>
    <scope>BIOPHYSICOCHEMICAL PROPERTIES</scope>
    <scope>MUTAGENESIS OF SER-139</scope>
    <scope>ACTIVE SITE</scope>
    <scope>DISRUPTION PHENOTYPE</scope>
    <scope>SUBCELLULAR LOCATION</scope>
    <scope>PATHWAY</scope>
</reference>
<reference evidence="8 9" key="3">
    <citation type="journal article" date="2021" name="FEBS J.">
        <title>Structural basis for substrate specificity of the peroxisomal acyl-CoA hydrolase MpaH' involved in mycophenolic acid biosynthesis.</title>
        <authorList>
            <person name="You C."/>
            <person name="Li F."/>
            <person name="Zhang X."/>
            <person name="Ma L."/>
            <person name="Zhang Y.Z."/>
            <person name="Zhang W."/>
            <person name="Li S."/>
        </authorList>
    </citation>
    <scope>X-RAY CRYSTALLOGRAPHY (1.84 ANGSTROMS) IN COMPLEX WITH MYCOPHENOLIC ACID</scope>
    <scope>FUNCTION</scope>
    <scope>ACTIVE SITE</scope>
    <scope>CATALYTIC ACTIVITY</scope>
    <scope>MUTAGENESIS OF SER-139; ASP-163 AND HIS-365</scope>
    <scope>SUBUNIT</scope>
    <scope>PATHWAY</scope>
</reference>
<protein>
    <recommendedName>
        <fullName evidence="5">Type I acyl-CoA thioesterase mpaH'</fullName>
        <ecNumber evidence="2">3.1.1.-</ecNumber>
    </recommendedName>
    <alternativeName>
        <fullName evidence="4">Mycophenolic acid biosynthesis cluster protein H'</fullName>
    </alternativeName>
</protein>
<feature type="chain" id="PRO_0000451895" description="Type I acyl-CoA thioesterase mpaH'">
    <location>
        <begin position="1"/>
        <end position="433"/>
    </location>
</feature>
<feature type="region of interest" description="Abhydrolase domain" evidence="1">
    <location>
        <begin position="58"/>
        <end position="246"/>
    </location>
</feature>
<feature type="active site" description="Nucleophile" evidence="2 3">
    <location>
        <position position="139"/>
    </location>
</feature>
<feature type="active site" evidence="3 7">
    <location>
        <position position="163"/>
    </location>
</feature>
<feature type="active site" evidence="3 7">
    <location>
        <position position="365"/>
    </location>
</feature>
<feature type="binding site" evidence="3 9">
    <location>
        <position position="60"/>
    </location>
    <ligand>
        <name>substrate</name>
    </ligand>
</feature>
<feature type="binding site" evidence="3 9">
    <location>
        <position position="140"/>
    </location>
    <ligand>
        <name>substrate</name>
    </ligand>
</feature>
<feature type="mutagenesis site" description="Abolishes the acyl-CoA thioesterase activity." evidence="2 3">
    <original>S</original>
    <variation>A</variation>
    <location>
        <position position="139"/>
    </location>
</feature>
<feature type="mutagenesis site" description="Loses 49.5% of the acyl-CoA thioesterase activity." evidence="3">
    <original>D</original>
    <variation>A</variation>
    <location>
        <position position="163"/>
    </location>
</feature>
<feature type="mutagenesis site" description="Abolishes the acyl-CoA thioesterase activity." evidence="3">
    <original>H</original>
    <variation>A</variation>
    <location>
        <position position="365"/>
    </location>
</feature>
<feature type="strand" evidence="10">
    <location>
        <begin position="4"/>
        <end position="14"/>
    </location>
</feature>
<feature type="helix" evidence="10">
    <location>
        <begin position="22"/>
        <end position="24"/>
    </location>
</feature>
<feature type="strand" evidence="10">
    <location>
        <begin position="25"/>
        <end position="27"/>
    </location>
</feature>
<feature type="strand" evidence="10">
    <location>
        <begin position="33"/>
        <end position="41"/>
    </location>
</feature>
<feature type="strand" evidence="10">
    <location>
        <begin position="52"/>
        <end position="57"/>
    </location>
</feature>
<feature type="helix" evidence="10">
    <location>
        <begin position="64"/>
        <end position="67"/>
    </location>
</feature>
<feature type="helix" evidence="10">
    <location>
        <begin position="68"/>
        <end position="76"/>
    </location>
</feature>
<feature type="strand" evidence="10">
    <location>
        <begin position="83"/>
        <end position="89"/>
    </location>
</feature>
<feature type="helix" evidence="10">
    <location>
        <begin position="95"/>
        <end position="100"/>
    </location>
</feature>
<feature type="turn" evidence="10">
    <location>
        <begin position="101"/>
        <end position="104"/>
    </location>
</feature>
<feature type="helix" evidence="10">
    <location>
        <begin position="111"/>
        <end position="124"/>
    </location>
</feature>
<feature type="helix" evidence="10">
    <location>
        <begin position="126"/>
        <end position="128"/>
    </location>
</feature>
<feature type="strand" evidence="10">
    <location>
        <begin position="133"/>
        <end position="138"/>
    </location>
</feature>
<feature type="helix" evidence="10">
    <location>
        <begin position="141"/>
        <end position="151"/>
    </location>
</feature>
<feature type="strand" evidence="10">
    <location>
        <begin position="155"/>
        <end position="163"/>
    </location>
</feature>
<feature type="helix" evidence="10">
    <location>
        <begin position="182"/>
        <end position="188"/>
    </location>
</feature>
<feature type="strand" evidence="10">
    <location>
        <begin position="192"/>
        <end position="195"/>
    </location>
</feature>
<feature type="helix" evidence="10">
    <location>
        <begin position="196"/>
        <end position="202"/>
    </location>
</feature>
<feature type="helix" evidence="10">
    <location>
        <begin position="204"/>
        <end position="207"/>
    </location>
</feature>
<feature type="helix" evidence="10">
    <location>
        <begin position="212"/>
        <end position="221"/>
    </location>
</feature>
<feature type="strand" evidence="10">
    <location>
        <begin position="222"/>
        <end position="226"/>
    </location>
</feature>
<feature type="strand" evidence="10">
    <location>
        <begin position="229"/>
        <end position="231"/>
    </location>
</feature>
<feature type="helix" evidence="10">
    <location>
        <begin position="234"/>
        <end position="241"/>
    </location>
</feature>
<feature type="strand" evidence="10">
    <location>
        <begin position="252"/>
        <end position="256"/>
    </location>
</feature>
<feature type="helix" evidence="10">
    <location>
        <begin position="258"/>
        <end position="265"/>
    </location>
</feature>
<feature type="turn" evidence="10">
    <location>
        <begin position="275"/>
        <end position="277"/>
    </location>
</feature>
<feature type="helix" evidence="10">
    <location>
        <begin position="284"/>
        <end position="287"/>
    </location>
</feature>
<feature type="helix" evidence="10">
    <location>
        <begin position="292"/>
        <end position="294"/>
    </location>
</feature>
<feature type="strand" evidence="10">
    <location>
        <begin position="297"/>
        <end position="300"/>
    </location>
</feature>
<feature type="helix" evidence="10">
    <location>
        <begin position="302"/>
        <end position="309"/>
    </location>
</feature>
<feature type="helix" evidence="10">
    <location>
        <begin position="310"/>
        <end position="313"/>
    </location>
</feature>
<feature type="strand" evidence="10">
    <location>
        <begin position="316"/>
        <end position="323"/>
    </location>
</feature>
<feature type="helix" evidence="10">
    <location>
        <begin position="330"/>
        <end position="339"/>
    </location>
</feature>
<feature type="helix" evidence="10">
    <location>
        <begin position="350"/>
        <end position="352"/>
    </location>
</feature>
<feature type="strand" evidence="10">
    <location>
        <begin position="355"/>
        <end position="360"/>
    </location>
</feature>
<feature type="helix" evidence="10">
    <location>
        <begin position="367"/>
        <end position="370"/>
    </location>
</feature>
<feature type="helix" evidence="10">
    <location>
        <begin position="372"/>
        <end position="401"/>
    </location>
</feature>
<feature type="strand" evidence="10">
    <location>
        <begin position="406"/>
        <end position="408"/>
    </location>
</feature>
<feature type="helix" evidence="10">
    <location>
        <begin position="412"/>
        <end position="416"/>
    </location>
</feature>
<proteinExistence type="evidence at protein level"/>
<sequence>MSTEKFTITEHLVPGSHIREYPGSTVNQEDVLKIHVKQYTPKREGPVPDDAITFIATHGVGLPKELYEPLWDELLDQASGFHIRAIWMADVASMNQSGIHNEDKLSMDCSWMDHARDLLLMINHFRDQMPRPLVGIGHSFGGNIITNLAYLHPRLFTTLLLLDPLIQLSPPSLGFGTDAPSAINYTLWRDDVWPSREVAIRANRAIMQGMDPRCLDRMTKHFFRDLPTPLYPDVEAIKALFGTTADSTTTPVTLTTPKYHELVAQIRQNFNARDPKTGRIEVPRDTHADMDPLVAYIPLYRPEPRSTFRRLETLRPSCLWVIAGATFLNIDEIREGVKICGSGIGGSGGVPDGRVREVVLPGFGHLMPFQEVKTVAETCIVWLQQEMDRFRQTERQWKEDRDGKSHLAVEENWYKVLKPIPSGRKKRNDKGKL</sequence>
<comment type="function">
    <text evidence="2 3 7">Type I acyl-CoA thioesterase; part of the gene cluster that mediates the biosynthesis of mycophenolic acid (MPA), the first isolated antibiotic natural product in the world obtained from a culture of Penicillium brevicompactum in 1893 (PubMed:31209052, PubMed:33843134). MpaH' acts as a peroxisomal acyl-CoA hydrolase that converts MPA-CoA into the final product MPA (PubMed:31209052, PubMed:33843134). The first step of the pathway is the synthesis of 5-methylorsellinic acid (5MOA) by the cytosolic polyketide synthase mpaC. 5MOA is then converted to the phthalide compound 5,7-dihydroxy-4,6-dimethylphthalide (DHMP) by the endoplasmic reticulum-bound cytochrome P450 monooxygenase mpaDE. MpaDE first catalyzes hydroxylation of 5-MOA to 4,6-dihydroxy-2-(hydroxymethyl)-3-methylbenzoic acid (DHMB). MpaDE then acts as a lactone synthase that catalyzes the ring closure to convert DHMB into DHMP. The next step is the prenylation of DHMP by the Golgi apparatus-associated prenyltransferase mpaA to yield farnesyl-DHMP (FDHMP). The ER-bound oxygenase mpaB then mediates the oxidative cleavage the C19-C20 double bond in FDHMP to yield FDHMP-3C via a mycophenolic aldehyde intermediate. The O-methyltransferase mpaG catalyzes the methylation of FDHMP-3C to yield MFDHMP-3C. After the cytosolic methylation of FDHMP-3C, MFDHMP-3C enters into peroxisomes probably via free diffusion due to its low molecular weight. Upon a peroxisomal CoA ligation reaction, catalyzed by a beta-oxidation component enzyme acyl-CoA ligase ACL891, MFDHMP-3C-CoA would then be restricted to peroxisomes for the following beta-oxidation pathway steps. The peroxisomal beta-oxidation machinery than converts MFDHMP-3C-CoA into MPA_CoA, via a beta-oxidation chain-shortening process. Finally mpaH acts as a peroxisomal acyl-CoA hydrolase with high substrate specificity toward MPA-CoA to release the final product MPA (Probable) (PubMed:31209052).</text>
</comment>
<comment type="catalytic activity">
    <reaction evidence="2 3">
        <text>mycophenolyl-CoA + H2O = mycophenolate + CoA + H(+)</text>
        <dbReference type="Rhea" id="RHEA:66704"/>
        <dbReference type="ChEBI" id="CHEBI:15377"/>
        <dbReference type="ChEBI" id="CHEBI:15378"/>
        <dbReference type="ChEBI" id="CHEBI:57287"/>
        <dbReference type="ChEBI" id="CHEBI:62932"/>
        <dbReference type="ChEBI" id="CHEBI:167447"/>
    </reaction>
    <physiologicalReaction direction="left-to-right" evidence="2 3">
        <dbReference type="Rhea" id="RHEA:66705"/>
    </physiologicalReaction>
</comment>
<comment type="biophysicochemical properties">
    <kinetics>
        <KM evidence="2">722.3 uM for acetyl-CoA</KM>
        <KM evidence="2">351.5 uM for propionyl-CoA</KM>
        <KM evidence="2">76.37 uM for malonyl-CoA</KM>
        <KM evidence="2">201.9 uM for isobutyryl-CoA</KM>
        <KM evidence="2">780.83 uM for isovaleryl-CoA</KM>
        <KM evidence="2">217.9 uM for benzoyl-CoA</KM>
        <KM evidence="2">143 uM for N-decanoyl-CoA</KM>
        <KM evidence="2">260.2 uM for lauroyl-CoA</KM>
        <KM evidence="2">577 uM for palmitoyl-CoA</KM>
        <KM evidence="2">316.6 uM for arachidonoyl-CoA</KM>
        <KM evidence="2">382.6 uM for DMMPA-CoA</KM>
        <KM evidence="2">117.5 uM for MPA-CoA</KM>
        <text evidence="2">The kcat values are 54.98 min(-1) for acetyl-CoA, 24.58 min(-1) for propionyl-CoA, 12.94 min(-1) for malonyl-CoA, 7.688 min(-1) for isobutyryl-CoA, 5.718 min(-1) for isovaleryl-CoA, 3.891 min(-1) for benzoyl-CoA, 136.5 min(-1) for N-decanoyl-CoA, 99.11 min(-1) for lauroyl-CoA, 23.19 min(-1) for palmitoyl-CoA, 47.35 min(-1) for arachidonoyl-CoA, 4438 min(-1) for DMMPA-CoA and 9578 min(-1) for MPA-CoA.</text>
    </kinetics>
</comment>
<comment type="pathway">
    <text evidence="2 3">Secondary metabolite biosynthesis; terpenoid biosynthesis.</text>
</comment>
<comment type="subunit">
    <text evidence="3">Homodimer.</text>
</comment>
<comment type="subcellular location">
    <subcellularLocation>
        <location evidence="2">Peroxisome matrix</location>
    </subcellularLocation>
    <text evidence="2">The mpaH' location in peroxisomes is required for the unique cooperation between biosynthetic and beta-oxidation catabolism machineries to produce final MPA.</text>
</comment>
<comment type="disruption phenotype">
    <text evidence="2">Retains the ability to produce MPA, albeit with an about 50% lower yield, and accumulates 2 compounds (MFDHMP-d4 and MFDHMP-d5) with an even shorter isoprenyl chain than MPA.</text>
</comment>
<comment type="similarity">
    <text evidence="6">Belongs to the AB hydrolase superfamily. MpaH hydrolase family.</text>
</comment>
<comment type="sequence caution" evidence="6">
    <conflict type="erroneous gene model prediction">
        <sequence resource="EMBL-CDS" id="AJG44385"/>
    </conflict>
</comment>
<accession>A0A0B5LB55</accession>
<evidence type="ECO:0000255" key="1"/>
<evidence type="ECO:0000269" key="2">
    <source>
    </source>
</evidence>
<evidence type="ECO:0000269" key="3">
    <source>
    </source>
</evidence>
<evidence type="ECO:0000303" key="4">
    <source>
    </source>
</evidence>
<evidence type="ECO:0000303" key="5">
    <source>
    </source>
</evidence>
<evidence type="ECO:0000305" key="6"/>
<evidence type="ECO:0000305" key="7">
    <source>
    </source>
</evidence>
<evidence type="ECO:0007744" key="8">
    <source>
        <dbReference type="PDB" id="7DBI"/>
    </source>
</evidence>
<evidence type="ECO:0007744" key="9">
    <source>
        <dbReference type="PDB" id="7DBL"/>
    </source>
</evidence>
<evidence type="ECO:0007829" key="10">
    <source>
        <dbReference type="PDB" id="7DBL"/>
    </source>
</evidence>
<keyword id="KW-0002">3D-structure</keyword>
<keyword id="KW-0378">Hydrolase</keyword>
<keyword id="KW-0576">Peroxisome</keyword>
<dbReference type="EC" id="3.1.1.-" evidence="2"/>
<dbReference type="EMBL" id="KM595305">
    <property type="protein sequence ID" value="AJG44385.1"/>
    <property type="status" value="ALT_SEQ"/>
    <property type="molecule type" value="Genomic_DNA"/>
</dbReference>
<dbReference type="PDB" id="7DBI">
    <property type="method" value="X-ray"/>
    <property type="resolution" value="1.99 A"/>
    <property type="chains" value="A/B/C/D=1-433"/>
</dbReference>
<dbReference type="PDB" id="7DBL">
    <property type="method" value="X-ray"/>
    <property type="resolution" value="1.84 A"/>
    <property type="chains" value="A/B/C/D=1-433"/>
</dbReference>
<dbReference type="PDBsum" id="7DBI"/>
<dbReference type="PDBsum" id="7DBL"/>
<dbReference type="SMR" id="A0A0B5LB55"/>
<dbReference type="ESTHER" id="penbr-mpaH">
    <property type="family name" value="MpaH"/>
</dbReference>
<dbReference type="OrthoDB" id="94039at2759"/>
<dbReference type="SABIO-RK" id="A0A0B5LB55"/>
<dbReference type="UniPathway" id="UPA00213"/>
<dbReference type="GO" id="GO:0005782">
    <property type="term" value="C:peroxisomal matrix"/>
    <property type="evidence" value="ECO:0000314"/>
    <property type="project" value="GO_Central"/>
</dbReference>
<dbReference type="GO" id="GO:0047617">
    <property type="term" value="F:fatty acyl-CoA hydrolase activity"/>
    <property type="evidence" value="ECO:0000314"/>
    <property type="project" value="UniProt"/>
</dbReference>
<dbReference type="GO" id="GO:0016787">
    <property type="term" value="F:hydrolase activity"/>
    <property type="evidence" value="ECO:0000314"/>
    <property type="project" value="GO_Central"/>
</dbReference>
<dbReference type="GO" id="GO:0016218">
    <property type="term" value="F:polyketide synthase activity"/>
    <property type="evidence" value="ECO:0000314"/>
    <property type="project" value="UniProt"/>
</dbReference>
<dbReference type="GO" id="GO:0140722">
    <property type="term" value="P:mycophenolic acid biosynthetic process"/>
    <property type="evidence" value="ECO:0000314"/>
    <property type="project" value="GO_Central"/>
</dbReference>
<dbReference type="GO" id="GO:0016114">
    <property type="term" value="P:terpenoid biosynthetic process"/>
    <property type="evidence" value="ECO:0007669"/>
    <property type="project" value="UniProtKB-UniPathway"/>
</dbReference>
<dbReference type="Gene3D" id="3.40.50.1820">
    <property type="entry name" value="alpha/beta hydrolase"/>
    <property type="match status" value="1"/>
</dbReference>
<dbReference type="InterPro" id="IPR000073">
    <property type="entry name" value="AB_hydrolase_1"/>
</dbReference>
<dbReference type="InterPro" id="IPR029058">
    <property type="entry name" value="AB_hydrolase_fold"/>
</dbReference>
<dbReference type="Pfam" id="PF12697">
    <property type="entry name" value="Abhydrolase_6"/>
    <property type="match status" value="1"/>
</dbReference>
<dbReference type="SUPFAM" id="SSF53474">
    <property type="entry name" value="alpha/beta-Hydrolases"/>
    <property type="match status" value="1"/>
</dbReference>
<organism>
    <name type="scientific">Penicillium brevicompactum</name>
    <dbReference type="NCBI Taxonomy" id="5074"/>
    <lineage>
        <taxon>Eukaryota</taxon>
        <taxon>Fungi</taxon>
        <taxon>Dikarya</taxon>
        <taxon>Ascomycota</taxon>
        <taxon>Pezizomycotina</taxon>
        <taxon>Eurotiomycetes</taxon>
        <taxon>Eurotiomycetidae</taxon>
        <taxon>Eurotiales</taxon>
        <taxon>Aspergillaceae</taxon>
        <taxon>Penicillium</taxon>
    </lineage>
</organism>